<name>GLYA_ANADE</name>
<dbReference type="EC" id="2.1.2.1" evidence="1"/>
<dbReference type="EMBL" id="CP000251">
    <property type="protein sequence ID" value="ABC82514.1"/>
    <property type="molecule type" value="Genomic_DNA"/>
</dbReference>
<dbReference type="RefSeq" id="WP_011421796.1">
    <property type="nucleotide sequence ID" value="NC_007760.1"/>
</dbReference>
<dbReference type="SMR" id="Q2ILI1"/>
<dbReference type="STRING" id="290397.Adeh_2744"/>
<dbReference type="KEGG" id="ade:Adeh_2744"/>
<dbReference type="eggNOG" id="COG0112">
    <property type="taxonomic scope" value="Bacteria"/>
</dbReference>
<dbReference type="HOGENOM" id="CLU_022477_2_1_7"/>
<dbReference type="OrthoDB" id="9803846at2"/>
<dbReference type="UniPathway" id="UPA00193"/>
<dbReference type="UniPathway" id="UPA00288">
    <property type="reaction ID" value="UER01023"/>
</dbReference>
<dbReference type="Proteomes" id="UP000001935">
    <property type="component" value="Chromosome"/>
</dbReference>
<dbReference type="GO" id="GO:0005829">
    <property type="term" value="C:cytosol"/>
    <property type="evidence" value="ECO:0007669"/>
    <property type="project" value="TreeGrafter"/>
</dbReference>
<dbReference type="GO" id="GO:0004372">
    <property type="term" value="F:glycine hydroxymethyltransferase activity"/>
    <property type="evidence" value="ECO:0007669"/>
    <property type="project" value="UniProtKB-UniRule"/>
</dbReference>
<dbReference type="GO" id="GO:0030170">
    <property type="term" value="F:pyridoxal phosphate binding"/>
    <property type="evidence" value="ECO:0007669"/>
    <property type="project" value="UniProtKB-UniRule"/>
</dbReference>
<dbReference type="GO" id="GO:0019264">
    <property type="term" value="P:glycine biosynthetic process from serine"/>
    <property type="evidence" value="ECO:0007669"/>
    <property type="project" value="UniProtKB-UniRule"/>
</dbReference>
<dbReference type="GO" id="GO:0035999">
    <property type="term" value="P:tetrahydrofolate interconversion"/>
    <property type="evidence" value="ECO:0007669"/>
    <property type="project" value="UniProtKB-UniRule"/>
</dbReference>
<dbReference type="CDD" id="cd00378">
    <property type="entry name" value="SHMT"/>
    <property type="match status" value="1"/>
</dbReference>
<dbReference type="FunFam" id="3.40.640.10:FF:000001">
    <property type="entry name" value="Serine hydroxymethyltransferase"/>
    <property type="match status" value="1"/>
</dbReference>
<dbReference type="FunFam" id="3.90.1150.10:FF:000003">
    <property type="entry name" value="Serine hydroxymethyltransferase"/>
    <property type="match status" value="1"/>
</dbReference>
<dbReference type="Gene3D" id="3.90.1150.10">
    <property type="entry name" value="Aspartate Aminotransferase, domain 1"/>
    <property type="match status" value="1"/>
</dbReference>
<dbReference type="Gene3D" id="3.40.640.10">
    <property type="entry name" value="Type I PLP-dependent aspartate aminotransferase-like (Major domain)"/>
    <property type="match status" value="1"/>
</dbReference>
<dbReference type="HAMAP" id="MF_00051">
    <property type="entry name" value="SHMT"/>
    <property type="match status" value="1"/>
</dbReference>
<dbReference type="InterPro" id="IPR015424">
    <property type="entry name" value="PyrdxlP-dep_Trfase"/>
</dbReference>
<dbReference type="InterPro" id="IPR015421">
    <property type="entry name" value="PyrdxlP-dep_Trfase_major"/>
</dbReference>
<dbReference type="InterPro" id="IPR015422">
    <property type="entry name" value="PyrdxlP-dep_Trfase_small"/>
</dbReference>
<dbReference type="InterPro" id="IPR001085">
    <property type="entry name" value="Ser_HO-MeTrfase"/>
</dbReference>
<dbReference type="InterPro" id="IPR049943">
    <property type="entry name" value="Ser_HO-MeTrfase-like"/>
</dbReference>
<dbReference type="InterPro" id="IPR019798">
    <property type="entry name" value="Ser_HO-MeTrfase_PLP_BS"/>
</dbReference>
<dbReference type="InterPro" id="IPR039429">
    <property type="entry name" value="SHMT-like_dom"/>
</dbReference>
<dbReference type="NCBIfam" id="NF000586">
    <property type="entry name" value="PRK00011.1"/>
    <property type="match status" value="1"/>
</dbReference>
<dbReference type="PANTHER" id="PTHR11680">
    <property type="entry name" value="SERINE HYDROXYMETHYLTRANSFERASE"/>
    <property type="match status" value="1"/>
</dbReference>
<dbReference type="PANTHER" id="PTHR11680:SF50">
    <property type="entry name" value="SERINE HYDROXYMETHYLTRANSFERASE"/>
    <property type="match status" value="1"/>
</dbReference>
<dbReference type="Pfam" id="PF00464">
    <property type="entry name" value="SHMT"/>
    <property type="match status" value="1"/>
</dbReference>
<dbReference type="PIRSF" id="PIRSF000412">
    <property type="entry name" value="SHMT"/>
    <property type="match status" value="1"/>
</dbReference>
<dbReference type="SUPFAM" id="SSF53383">
    <property type="entry name" value="PLP-dependent transferases"/>
    <property type="match status" value="1"/>
</dbReference>
<dbReference type="PROSITE" id="PS00096">
    <property type="entry name" value="SHMT"/>
    <property type="match status" value="1"/>
</dbReference>
<gene>
    <name evidence="1" type="primary">glyA</name>
    <name type="ordered locus">Adeh_2744</name>
</gene>
<evidence type="ECO:0000255" key="1">
    <source>
        <dbReference type="HAMAP-Rule" id="MF_00051"/>
    </source>
</evidence>
<keyword id="KW-0028">Amino-acid biosynthesis</keyword>
<keyword id="KW-0963">Cytoplasm</keyword>
<keyword id="KW-0554">One-carbon metabolism</keyword>
<keyword id="KW-0663">Pyridoxal phosphate</keyword>
<keyword id="KW-1185">Reference proteome</keyword>
<keyword id="KW-0808">Transferase</keyword>
<reference key="1">
    <citation type="submission" date="2006-01" db="EMBL/GenBank/DDBJ databases">
        <title>Complete sequence of Anaeromyxobacter dehalogenans 2CP-C.</title>
        <authorList>
            <person name="Copeland A."/>
            <person name="Lucas S."/>
            <person name="Lapidus A."/>
            <person name="Barry K."/>
            <person name="Detter J.C."/>
            <person name="Glavina T."/>
            <person name="Hammon N."/>
            <person name="Israni S."/>
            <person name="Pitluck S."/>
            <person name="Brettin T."/>
            <person name="Bruce D."/>
            <person name="Han C."/>
            <person name="Tapia R."/>
            <person name="Gilna P."/>
            <person name="Kiss H."/>
            <person name="Schmutz J."/>
            <person name="Larimer F."/>
            <person name="Land M."/>
            <person name="Kyrpides N."/>
            <person name="Anderson I."/>
            <person name="Sanford R.A."/>
            <person name="Ritalahti K.M."/>
            <person name="Thomas H.S."/>
            <person name="Kirby J.R."/>
            <person name="Zhulin I.B."/>
            <person name="Loeffler F.E."/>
            <person name="Richardson P."/>
        </authorList>
    </citation>
    <scope>NUCLEOTIDE SEQUENCE [LARGE SCALE GENOMIC DNA]</scope>
    <source>
        <strain>2CP-C</strain>
    </source>
</reference>
<accession>Q2ILI1</accession>
<sequence>MMPTQRLAEADPQIAKLIREETRRQAEGLELIASENFVSPAVLEALGSTLTNKYAEGYPGKRYYGGCEVVDQVEQLAIDRAKQLFGADHANVQPHAGSQANMAAYFALAKPGDTVLAMSLNFGGHLTHGSPVNFSGKLFKIVPYGLRQSDETIDMDEVARLAREHRPRILMVGASAYSRTLHFDRFAEIANEVGAAMVVDMAHIAGLVAAGLHPSPVPHSEIVTTTTHKTLRGPRGGMILCREAHAKTLNSQIFPGIQGGPLEHVIAAKAVAFGEALRPEFKEYQRRIVENAQVLAEGLKSAGLRLVSGGTDNHLMLVDLRPKKLTGKVAEEALGKAGITVNKNMIPWDPEKPMTTSGIRVGTPALSTRGMGPREMTLVAALIGRVLDAPADEQVLARVRGEVKDLCAHFPMYADRV</sequence>
<feature type="chain" id="PRO_0000234945" description="Serine hydroxymethyltransferase">
    <location>
        <begin position="1"/>
        <end position="417"/>
    </location>
</feature>
<feature type="binding site" evidence="1">
    <location>
        <position position="120"/>
    </location>
    <ligand>
        <name>(6S)-5,6,7,8-tetrahydrofolate</name>
        <dbReference type="ChEBI" id="CHEBI:57453"/>
    </ligand>
</feature>
<feature type="binding site" evidence="1">
    <location>
        <begin position="124"/>
        <end position="126"/>
    </location>
    <ligand>
        <name>(6S)-5,6,7,8-tetrahydrofolate</name>
        <dbReference type="ChEBI" id="CHEBI:57453"/>
    </ligand>
</feature>
<feature type="site" description="Plays an important role in substrate specificity" evidence="1">
    <location>
        <position position="228"/>
    </location>
</feature>
<feature type="modified residue" description="N6-(pyridoxal phosphate)lysine" evidence="1">
    <location>
        <position position="229"/>
    </location>
</feature>
<comment type="function">
    <text evidence="1">Catalyzes the reversible interconversion of serine and glycine with tetrahydrofolate (THF) serving as the one-carbon carrier. This reaction serves as the major source of one-carbon groups required for the biosynthesis of purines, thymidylate, methionine, and other important biomolecules. Also exhibits THF-independent aldolase activity toward beta-hydroxyamino acids, producing glycine and aldehydes, via a retro-aldol mechanism.</text>
</comment>
<comment type="catalytic activity">
    <reaction evidence="1">
        <text>(6R)-5,10-methylene-5,6,7,8-tetrahydrofolate + glycine + H2O = (6S)-5,6,7,8-tetrahydrofolate + L-serine</text>
        <dbReference type="Rhea" id="RHEA:15481"/>
        <dbReference type="ChEBI" id="CHEBI:15377"/>
        <dbReference type="ChEBI" id="CHEBI:15636"/>
        <dbReference type="ChEBI" id="CHEBI:33384"/>
        <dbReference type="ChEBI" id="CHEBI:57305"/>
        <dbReference type="ChEBI" id="CHEBI:57453"/>
        <dbReference type="EC" id="2.1.2.1"/>
    </reaction>
</comment>
<comment type="cofactor">
    <cofactor evidence="1">
        <name>pyridoxal 5'-phosphate</name>
        <dbReference type="ChEBI" id="CHEBI:597326"/>
    </cofactor>
</comment>
<comment type="pathway">
    <text evidence="1">One-carbon metabolism; tetrahydrofolate interconversion.</text>
</comment>
<comment type="pathway">
    <text evidence="1">Amino-acid biosynthesis; glycine biosynthesis; glycine from L-serine: step 1/1.</text>
</comment>
<comment type="subunit">
    <text evidence="1">Homodimer.</text>
</comment>
<comment type="subcellular location">
    <subcellularLocation>
        <location evidence="1">Cytoplasm</location>
    </subcellularLocation>
</comment>
<comment type="similarity">
    <text evidence="1">Belongs to the SHMT family.</text>
</comment>
<proteinExistence type="inferred from homology"/>
<organism>
    <name type="scientific">Anaeromyxobacter dehalogenans (strain 2CP-C)</name>
    <dbReference type="NCBI Taxonomy" id="290397"/>
    <lineage>
        <taxon>Bacteria</taxon>
        <taxon>Pseudomonadati</taxon>
        <taxon>Myxococcota</taxon>
        <taxon>Myxococcia</taxon>
        <taxon>Myxococcales</taxon>
        <taxon>Cystobacterineae</taxon>
        <taxon>Anaeromyxobacteraceae</taxon>
        <taxon>Anaeromyxobacter</taxon>
    </lineage>
</organism>
<protein>
    <recommendedName>
        <fullName evidence="1">Serine hydroxymethyltransferase</fullName>
        <shortName evidence="1">SHMT</shortName>
        <shortName evidence="1">Serine methylase</shortName>
        <ecNumber evidence="1">2.1.2.1</ecNumber>
    </recommendedName>
</protein>